<accession>Q9UXT7</accession>
<accession>G8ZKV4</accession>
<gene>
    <name evidence="1" type="primary">kae1</name>
    <name type="ordered locus">PYRAB17710</name>
    <name type="ORF">PAB1159</name>
</gene>
<evidence type="ECO:0000255" key="1">
    <source>
        <dbReference type="HAMAP-Rule" id="MF_01446"/>
    </source>
</evidence>
<evidence type="ECO:0000269" key="2">
    <source>
    </source>
</evidence>
<evidence type="ECO:0000269" key="3">
    <source>
    </source>
</evidence>
<evidence type="ECO:0000269" key="4">
    <source>
    </source>
</evidence>
<evidence type="ECO:0000269" key="5">
    <source>
    </source>
</evidence>
<evidence type="ECO:0000305" key="6"/>
<evidence type="ECO:0000305" key="7">
    <source>
    </source>
</evidence>
<evidence type="ECO:0007829" key="8">
    <source>
        <dbReference type="PDB" id="2IVN"/>
    </source>
</evidence>
<proteinExistence type="evidence at protein level"/>
<keyword id="KW-0002">3D-structure</keyword>
<keyword id="KW-0012">Acyltransferase</keyword>
<keyword id="KW-0963">Cytoplasm</keyword>
<keyword id="KW-0408">Iron</keyword>
<keyword id="KW-0479">Metal-binding</keyword>
<keyword id="KW-0808">Transferase</keyword>
<keyword id="KW-0819">tRNA processing</keyword>
<reference key="1">
    <citation type="journal article" date="2003" name="Mol. Microbiol.">
        <title>An integrated analysis of the genome of the hyperthermophilic archaeon Pyrococcus abyssi.</title>
        <authorList>
            <person name="Cohen G.N."/>
            <person name="Barbe V."/>
            <person name="Flament D."/>
            <person name="Galperin M."/>
            <person name="Heilig R."/>
            <person name="Lecompte O."/>
            <person name="Poch O."/>
            <person name="Prieur D."/>
            <person name="Querellou J."/>
            <person name="Ripp R."/>
            <person name="Thierry J.-C."/>
            <person name="Van der Oost J."/>
            <person name="Weissenbach J."/>
            <person name="Zivanovic Y."/>
            <person name="Forterre P."/>
        </authorList>
    </citation>
    <scope>NUCLEOTIDE SEQUENCE [LARGE SCALE GENOMIC DNA]</scope>
    <source>
        <strain>GE5 / Orsay</strain>
    </source>
</reference>
<reference key="2">
    <citation type="journal article" date="2012" name="Curr. Microbiol.">
        <title>Re-annotation of two hyperthermophilic archaea Pyrococcus abyssi GE5 and Pyrococcus furiosus DSM 3638.</title>
        <authorList>
            <person name="Gao J."/>
            <person name="Wang J."/>
        </authorList>
    </citation>
    <scope>GENOME REANNOTATION</scope>
    <source>
        <strain>GE5 / Orsay</strain>
    </source>
</reference>
<reference key="3">
    <citation type="journal article" date="2009" name="Biochem. Soc. Trans.">
        <title>The universal Kae1 protein and the associated Bud32 kinase (PRPK), a mysterious protein couple probably essential for genome maintenance in Archaea and Eukarya.</title>
        <authorList>
            <person name="Hecker A."/>
            <person name="Graille M."/>
            <person name="Madec E."/>
            <person name="Gadelle D."/>
            <person name="Le Cam E."/>
            <person name="van Tilbergh H."/>
            <person name="Forterre P."/>
        </authorList>
    </citation>
    <scope>FUNCTION</scope>
    <scope>IRON-BINDING</scope>
    <scope>DNA-BINDING</scope>
</reference>
<reference key="4">
    <citation type="journal article" date="2013" name="Nucleic Acids Res.">
        <title>In vitro biosynthesis of a universal t6A tRNA modification in Archaea and Eukarya.</title>
        <authorList>
            <person name="Perrochia L."/>
            <person name="Crozat E."/>
            <person name="Hecker A."/>
            <person name="Zhang W."/>
            <person name="Bareille J."/>
            <person name="Collinet B."/>
            <person name="van Tilbeurgh H."/>
            <person name="Forterre P."/>
            <person name="Basta T."/>
        </authorList>
    </citation>
    <scope>FUNCTION IN T(6)A TRNA MODIFICATION</scope>
    <scope>CATALYTIC ACTIVITY</scope>
    <scope>SUBUNIT</scope>
    <scope>TRNA- AND RNA-BINDING</scope>
    <source>
        <strain>GE5 / Orsay</strain>
    </source>
</reference>
<reference key="5">
    <citation type="journal article" date="2013" name="Nucleic Acids Res.">
        <title>Functional assignment of KEOPS/EKC complex subunits in the biosynthesis of the universal t6A tRNA modification.</title>
        <authorList>
            <person name="Perrochia L."/>
            <person name="Guetta D."/>
            <person name="Hecker A."/>
            <person name="Forterre P."/>
            <person name="Basta T."/>
        </authorList>
    </citation>
    <scope>FUNCTION IN THE KEOPS COMPLEX</scope>
    <scope>SUBUNIT</scope>
    <scope>MUTAGENESIS OF HIS-107 AND ASP-159</scope>
</reference>
<reference key="6">
    <citation type="journal article" date="2007" name="Nucleic Acids Res.">
        <title>An archaeal orthologue of the universal protein Kae1 is an iron metalloprotein which exhibits atypical DNA-binding properties and apurinic-endonuclease activity in vitro.</title>
        <authorList>
            <person name="Hecker A."/>
            <person name="Leulliot N."/>
            <person name="Gadelle D."/>
            <person name="Graille M."/>
            <person name="Justome A."/>
            <person name="Dorlet P."/>
            <person name="Brochier C."/>
            <person name="Quevillon-Cheruel S."/>
            <person name="Le Cam E."/>
            <person name="van Tilbeurgh H."/>
            <person name="Forterre P."/>
        </authorList>
    </citation>
    <scope>X-RAY CRYSTALLOGRAPHY (1.65 ANGSTROMS) IN COMPLEX WITH ATP AND IRON</scope>
    <scope>FUNCTION</scope>
    <scope>COFACTOR</scope>
    <scope>SUBUNIT</scope>
    <scope>IRON-BINDING</scope>
    <scope>DNA-BINDING</scope>
    <scope>MUTAGENESIS OF TYR-127</scope>
    <source>
        <strain>GE5 / Orsay</strain>
    </source>
</reference>
<protein>
    <recommendedName>
        <fullName evidence="1">tRNA N6-adenosine threonylcarbamoyltransferase</fullName>
        <ecNumber evidence="1 4">2.3.1.234</ecNumber>
    </recommendedName>
    <alternativeName>
        <fullName evidence="1">N6-L-threonylcarbamoyladenine synthase</fullName>
        <shortName evidence="1">t(6)A synthase</shortName>
    </alternativeName>
    <alternativeName>
        <fullName>Pa-Kae1</fullName>
    </alternativeName>
    <alternativeName>
        <fullName evidence="1">t(6)A37 threonylcarbamoyladenosine biosynthesis protein Kae1</fullName>
    </alternativeName>
    <alternativeName>
        <fullName evidence="1">tRNA threonylcarbamoyladenosine biosynthesis protein Kae1</fullName>
    </alternativeName>
</protein>
<name>KAE1_PYRAB</name>
<sequence length="324" mass="35368">MLALGIEGTAHTLGIGIVSEDKVLANVFDTLTTEKGGIHPKEAAEHHARLMKPLLRKALSEAGVSLDDIDVIAFSQGPGLGPALRVVATAARALAVKYRKPIVGVNHCIAHVEITKMFGVKDPVGLYVSGGNTQVLALEGGRYRVFGETLDIGIGNAIDVFARELGLGFPGGPKVEKLAEKGEKYIELPYAVKGMDLSFSGLLTEAIRKYRSGKYRVEDLAYSFQETAFAALVEVTERAVAHTEKDEVVLVGGVAANNRLREMLRIMTEDRGIKFFVPPYDLCRDNGAMIAYTGLRMYKAGISFRLEETIVKQKFRTDEVEIVW</sequence>
<comment type="function">
    <text evidence="1 2 3 4 5">Required for the formation of a threonylcarbamoyl group on adenosine at position 37 (t(6)A37) in tRNAs that read codons beginning with adenine. Is a component of the KEOPS complex that is probably involved in the transfer of the threonylcarbamoyl moiety of threonylcarbamoyl-AMP (TC-AMP) to the N6 group of A37. Kae1 likely plays a direct catalytic role in this reaction, but requires other protein(s) of the complex to fulfill this activity. In vitro, binds tRNA, ssRNA, both single- and double-stranded DNA, and exhibits a low ATPase activity.</text>
</comment>
<comment type="catalytic activity">
    <reaction evidence="1 4">
        <text>L-threonylcarbamoyladenylate + adenosine(37) in tRNA = N(6)-L-threonylcarbamoyladenosine(37) in tRNA + AMP + H(+)</text>
        <dbReference type="Rhea" id="RHEA:37059"/>
        <dbReference type="Rhea" id="RHEA-COMP:10162"/>
        <dbReference type="Rhea" id="RHEA-COMP:10163"/>
        <dbReference type="ChEBI" id="CHEBI:15378"/>
        <dbReference type="ChEBI" id="CHEBI:73682"/>
        <dbReference type="ChEBI" id="CHEBI:74411"/>
        <dbReference type="ChEBI" id="CHEBI:74418"/>
        <dbReference type="ChEBI" id="CHEBI:456215"/>
        <dbReference type="EC" id="2.3.1.234"/>
    </reaction>
</comment>
<comment type="cofactor">
    <cofactor evidence="1 2">
        <name>Fe(2+)</name>
        <dbReference type="ChEBI" id="CHEBI:29033"/>
    </cofactor>
    <text evidence="1 2">Binds 1 Fe(2+) ion per subunit.</text>
</comment>
<comment type="subunit">
    <text evidence="1 2 4 5">Monomer. Component of the KEOPS complex that consists of Kae1, Bud32, Cgi121 and Pcc1; the whole complex dimerizes.</text>
</comment>
<comment type="subcellular location">
    <subcellularLocation>
        <location evidence="1">Cytoplasm</location>
    </subcellularLocation>
</comment>
<comment type="miscellaneous">
    <text>The ATP binding pocket identified in the crystal structure would actually engage the substrate TC-AMP.</text>
</comment>
<comment type="similarity">
    <text evidence="1">Belongs to the KAE1 / TsaD family.</text>
</comment>
<comment type="caution">
    <text evidence="7">Was originally (PubMed:17766251) thought to have endonuclease activity, but it could not be confirmed with orthologs purified from M.jannaschii (PubMed:18951093) and S.cerevisiae (PubMed:21183954).</text>
</comment>
<dbReference type="EC" id="2.3.1.234" evidence="1 4"/>
<dbReference type="EMBL" id="AJ248288">
    <property type="protein sequence ID" value="CAB50676.1"/>
    <property type="molecule type" value="Genomic_DNA"/>
</dbReference>
<dbReference type="EMBL" id="HE613800">
    <property type="protein sequence ID" value="CCE71245.1"/>
    <property type="molecule type" value="Genomic_DNA"/>
</dbReference>
<dbReference type="PIR" id="F75029">
    <property type="entry name" value="F75029"/>
</dbReference>
<dbReference type="RefSeq" id="WP_010868890.1">
    <property type="nucleotide sequence ID" value="NC_000868.1"/>
</dbReference>
<dbReference type="PDB" id="2IVN">
    <property type="method" value="X-ray"/>
    <property type="resolution" value="1.65 A"/>
    <property type="chains" value="A=1-324"/>
</dbReference>
<dbReference type="PDB" id="2IVO">
    <property type="method" value="X-ray"/>
    <property type="resolution" value="2.90 A"/>
    <property type="chains" value="A/B/C/D=1-324"/>
</dbReference>
<dbReference type="PDB" id="2IVP">
    <property type="method" value="X-ray"/>
    <property type="resolution" value="2.50 A"/>
    <property type="chains" value="A=1-324"/>
</dbReference>
<dbReference type="PDBsum" id="2IVN"/>
<dbReference type="PDBsum" id="2IVO"/>
<dbReference type="PDBsum" id="2IVP"/>
<dbReference type="SMR" id="Q9UXT7"/>
<dbReference type="STRING" id="272844.PAB1159"/>
<dbReference type="KEGG" id="pab:PAB1159"/>
<dbReference type="PATRIC" id="fig|272844.11.peg.1890"/>
<dbReference type="eggNOG" id="arCOG01183">
    <property type="taxonomic scope" value="Archaea"/>
</dbReference>
<dbReference type="HOGENOM" id="CLU_023208_2_2_2"/>
<dbReference type="OrthoDB" id="6818at2157"/>
<dbReference type="PhylomeDB" id="Q9UXT7"/>
<dbReference type="BRENDA" id="2.3.1.234">
    <property type="organism ID" value="5242"/>
</dbReference>
<dbReference type="EvolutionaryTrace" id="Q9UXT7"/>
<dbReference type="Proteomes" id="UP000000810">
    <property type="component" value="Chromosome"/>
</dbReference>
<dbReference type="Proteomes" id="UP000009139">
    <property type="component" value="Chromosome"/>
</dbReference>
<dbReference type="GO" id="GO:0005737">
    <property type="term" value="C:cytoplasm"/>
    <property type="evidence" value="ECO:0007669"/>
    <property type="project" value="UniProtKB-SubCell"/>
</dbReference>
<dbReference type="GO" id="GO:0000408">
    <property type="term" value="C:EKC/KEOPS complex"/>
    <property type="evidence" value="ECO:0000314"/>
    <property type="project" value="UniProtKB"/>
</dbReference>
<dbReference type="GO" id="GO:0005506">
    <property type="term" value="F:iron ion binding"/>
    <property type="evidence" value="ECO:0007669"/>
    <property type="project" value="UniProtKB-UniRule"/>
</dbReference>
<dbReference type="GO" id="GO:0061711">
    <property type="term" value="F:N(6)-L-threonylcarbamoyladenine synthase activity"/>
    <property type="evidence" value="ECO:0007669"/>
    <property type="project" value="UniProtKB-EC"/>
</dbReference>
<dbReference type="GO" id="GO:0003727">
    <property type="term" value="F:single-stranded RNA binding"/>
    <property type="evidence" value="ECO:0000314"/>
    <property type="project" value="UniProtKB"/>
</dbReference>
<dbReference type="GO" id="GO:0000049">
    <property type="term" value="F:tRNA binding"/>
    <property type="evidence" value="ECO:0000314"/>
    <property type="project" value="UniProtKB"/>
</dbReference>
<dbReference type="GO" id="GO:0002949">
    <property type="term" value="P:tRNA threonylcarbamoyladenosine modification"/>
    <property type="evidence" value="ECO:0000314"/>
    <property type="project" value="UniProtKB"/>
</dbReference>
<dbReference type="CDD" id="cd24131">
    <property type="entry name" value="ASKHA_NBD_Kae1_arch_bac"/>
    <property type="match status" value="1"/>
</dbReference>
<dbReference type="FunFam" id="3.30.420.40:FF:000038">
    <property type="entry name" value="Probable tRNA N6-adenosine threonylcarbamoyltransferase"/>
    <property type="match status" value="1"/>
</dbReference>
<dbReference type="Gene3D" id="3.30.420.40">
    <property type="match status" value="2"/>
</dbReference>
<dbReference type="HAMAP" id="MF_01446">
    <property type="entry name" value="Kae1"/>
    <property type="match status" value="1"/>
</dbReference>
<dbReference type="InterPro" id="IPR043129">
    <property type="entry name" value="ATPase_NBD"/>
</dbReference>
<dbReference type="InterPro" id="IPR000905">
    <property type="entry name" value="Gcp-like_dom"/>
</dbReference>
<dbReference type="InterPro" id="IPR017861">
    <property type="entry name" value="KAE1/TsaD"/>
</dbReference>
<dbReference type="InterPro" id="IPR034680">
    <property type="entry name" value="Kae1_archaea_euk"/>
</dbReference>
<dbReference type="InterPro" id="IPR017860">
    <property type="entry name" value="Peptidase_M22_CS"/>
</dbReference>
<dbReference type="NCBIfam" id="TIGR03722">
    <property type="entry name" value="arch_KAE1"/>
    <property type="match status" value="1"/>
</dbReference>
<dbReference type="NCBIfam" id="TIGR00329">
    <property type="entry name" value="gcp_kae1"/>
    <property type="match status" value="1"/>
</dbReference>
<dbReference type="NCBIfam" id="NF007174">
    <property type="entry name" value="PRK09605.1"/>
    <property type="match status" value="1"/>
</dbReference>
<dbReference type="PANTHER" id="PTHR11735">
    <property type="entry name" value="TRNA N6-ADENOSINE THREONYLCARBAMOYLTRANSFERASE"/>
    <property type="match status" value="1"/>
</dbReference>
<dbReference type="PANTHER" id="PTHR11735:SF14">
    <property type="entry name" value="TRNA N6-ADENOSINE THREONYLCARBAMOYLTRANSFERASE"/>
    <property type="match status" value="1"/>
</dbReference>
<dbReference type="Pfam" id="PF00814">
    <property type="entry name" value="TsaD"/>
    <property type="match status" value="1"/>
</dbReference>
<dbReference type="PRINTS" id="PR00789">
    <property type="entry name" value="OSIALOPTASE"/>
</dbReference>
<dbReference type="SUPFAM" id="SSF53067">
    <property type="entry name" value="Actin-like ATPase domain"/>
    <property type="match status" value="1"/>
</dbReference>
<dbReference type="PROSITE" id="PS01016">
    <property type="entry name" value="GLYCOPROTEASE"/>
    <property type="match status" value="1"/>
</dbReference>
<organism>
    <name type="scientific">Pyrococcus abyssi (strain GE5 / Orsay)</name>
    <dbReference type="NCBI Taxonomy" id="272844"/>
    <lineage>
        <taxon>Archaea</taxon>
        <taxon>Methanobacteriati</taxon>
        <taxon>Methanobacteriota</taxon>
        <taxon>Thermococci</taxon>
        <taxon>Thermococcales</taxon>
        <taxon>Thermococcaceae</taxon>
        <taxon>Pyrococcus</taxon>
    </lineage>
</organism>
<feature type="chain" id="PRO_0000096981" description="tRNA N6-adenosine threonylcarbamoyltransferase">
    <location>
        <begin position="1"/>
        <end position="324"/>
    </location>
</feature>
<feature type="binding site" evidence="1 2">
    <location>
        <position position="107"/>
    </location>
    <ligand>
        <name>Fe cation</name>
        <dbReference type="ChEBI" id="CHEBI:24875"/>
    </ligand>
</feature>
<feature type="binding site" evidence="1 2">
    <location>
        <position position="111"/>
    </location>
    <ligand>
        <name>Fe cation</name>
        <dbReference type="ChEBI" id="CHEBI:24875"/>
    </ligand>
</feature>
<feature type="binding site" evidence="6">
    <location>
        <begin position="127"/>
        <end position="131"/>
    </location>
    <ligand>
        <name>substrate</name>
    </ligand>
</feature>
<feature type="binding site" evidence="1 2">
    <location>
        <position position="127"/>
    </location>
    <ligand>
        <name>Fe cation</name>
        <dbReference type="ChEBI" id="CHEBI:24875"/>
    </ligand>
</feature>
<feature type="binding site" evidence="6">
    <location>
        <position position="159"/>
    </location>
    <ligand>
        <name>substrate</name>
    </ligand>
</feature>
<feature type="binding site" evidence="6">
    <location>
        <position position="172"/>
    </location>
    <ligand>
        <name>substrate</name>
    </ligand>
</feature>
<feature type="binding site" evidence="6">
    <location>
        <position position="176"/>
    </location>
    <ligand>
        <name>substrate</name>
    </ligand>
</feature>
<feature type="binding site" evidence="6">
    <location>
        <position position="257"/>
    </location>
    <ligand>
        <name>substrate</name>
    </ligand>
</feature>
<feature type="binding site" evidence="1 2">
    <location>
        <position position="285"/>
    </location>
    <ligand>
        <name>Fe cation</name>
        <dbReference type="ChEBI" id="CHEBI:24875"/>
    </ligand>
</feature>
<feature type="mutagenesis site" description="Abolishes iron binding. Reduces the tRNA modification activity of the KEOPS complex by 90%." evidence="5">
    <original>H</original>
    <variation>A</variation>
    <location>
        <position position="107"/>
    </location>
</feature>
<feature type="mutagenesis site" description="Loss of iron, but no change in DNA-binding." evidence="2">
    <original>Y</original>
    <variation>F</variation>
    <location>
        <position position="127"/>
    </location>
</feature>
<feature type="mutagenesis site" description="Completely impairs the tRNA modification activity of the KEOPS complex. Does not impair ATPase activity of the complex." evidence="5">
    <original>D</original>
    <variation>A</variation>
    <location>
        <position position="159"/>
    </location>
</feature>
<feature type="strand" evidence="8">
    <location>
        <begin position="3"/>
        <end position="7"/>
    </location>
</feature>
<feature type="strand" evidence="8">
    <location>
        <begin position="9"/>
        <end position="18"/>
    </location>
</feature>
<feature type="strand" evidence="8">
    <location>
        <begin position="23"/>
        <end position="30"/>
    </location>
</feature>
<feature type="helix" evidence="8">
    <location>
        <begin position="40"/>
        <end position="62"/>
    </location>
</feature>
<feature type="turn" evidence="8">
    <location>
        <begin position="66"/>
        <end position="68"/>
    </location>
</feature>
<feature type="strand" evidence="8">
    <location>
        <begin position="71"/>
        <end position="79"/>
    </location>
</feature>
<feature type="helix" evidence="8">
    <location>
        <begin position="81"/>
        <end position="97"/>
    </location>
</feature>
<feature type="strand" evidence="8">
    <location>
        <begin position="102"/>
        <end position="106"/>
    </location>
</feature>
<feature type="helix" evidence="8">
    <location>
        <begin position="107"/>
        <end position="113"/>
    </location>
</feature>
<feature type="helix" evidence="8">
    <location>
        <begin position="114"/>
        <end position="118"/>
    </location>
</feature>
<feature type="strand" evidence="8">
    <location>
        <begin position="124"/>
        <end position="128"/>
    </location>
</feature>
<feature type="strand" evidence="8">
    <location>
        <begin position="133"/>
        <end position="139"/>
    </location>
</feature>
<feature type="strand" evidence="8">
    <location>
        <begin position="142"/>
        <end position="152"/>
    </location>
</feature>
<feature type="helix" evidence="8">
    <location>
        <begin position="154"/>
        <end position="165"/>
    </location>
</feature>
<feature type="helix" evidence="8">
    <location>
        <begin position="171"/>
        <end position="180"/>
    </location>
</feature>
<feature type="helix" evidence="8">
    <location>
        <begin position="200"/>
        <end position="212"/>
    </location>
</feature>
<feature type="helix" evidence="8">
    <location>
        <begin position="217"/>
        <end position="243"/>
    </location>
</feature>
<feature type="strand" evidence="8">
    <location>
        <begin position="246"/>
        <end position="252"/>
    </location>
</feature>
<feature type="helix" evidence="8">
    <location>
        <begin position="253"/>
        <end position="256"/>
    </location>
</feature>
<feature type="helix" evidence="8">
    <location>
        <begin position="258"/>
        <end position="271"/>
    </location>
</feature>
<feature type="strand" evidence="8">
    <location>
        <begin position="274"/>
        <end position="276"/>
    </location>
</feature>
<feature type="helix" evidence="8">
    <location>
        <begin position="280"/>
        <end position="283"/>
    </location>
</feature>
<feature type="helix" evidence="8">
    <location>
        <begin position="287"/>
        <end position="299"/>
    </location>
</feature>
<feature type="helix" evidence="8">
    <location>
        <begin position="306"/>
        <end position="309"/>
    </location>
</feature>
<feature type="helix" evidence="8">
    <location>
        <begin position="317"/>
        <end position="319"/>
    </location>
</feature>